<evidence type="ECO:0000255" key="1">
    <source>
        <dbReference type="HAMAP-Rule" id="MF_00211"/>
    </source>
</evidence>
<dbReference type="EC" id="2.4.2.18" evidence="1"/>
<dbReference type="EMBL" id="CP000607">
    <property type="protein sequence ID" value="ABP37405.1"/>
    <property type="molecule type" value="Genomic_DNA"/>
</dbReference>
<dbReference type="SMR" id="A4SFZ6"/>
<dbReference type="STRING" id="290318.Cvib_1394"/>
<dbReference type="KEGG" id="pvi:Cvib_1394"/>
<dbReference type="eggNOG" id="COG0547">
    <property type="taxonomic scope" value="Bacteria"/>
</dbReference>
<dbReference type="HOGENOM" id="CLU_034315_2_1_10"/>
<dbReference type="OrthoDB" id="9806430at2"/>
<dbReference type="UniPathway" id="UPA00035">
    <property type="reaction ID" value="UER00041"/>
</dbReference>
<dbReference type="GO" id="GO:0005829">
    <property type="term" value="C:cytosol"/>
    <property type="evidence" value="ECO:0007669"/>
    <property type="project" value="TreeGrafter"/>
</dbReference>
<dbReference type="GO" id="GO:0004048">
    <property type="term" value="F:anthranilate phosphoribosyltransferase activity"/>
    <property type="evidence" value="ECO:0007669"/>
    <property type="project" value="UniProtKB-UniRule"/>
</dbReference>
<dbReference type="GO" id="GO:0000287">
    <property type="term" value="F:magnesium ion binding"/>
    <property type="evidence" value="ECO:0007669"/>
    <property type="project" value="UniProtKB-UniRule"/>
</dbReference>
<dbReference type="GO" id="GO:0000162">
    <property type="term" value="P:L-tryptophan biosynthetic process"/>
    <property type="evidence" value="ECO:0007669"/>
    <property type="project" value="UniProtKB-UniRule"/>
</dbReference>
<dbReference type="FunFam" id="3.40.1030.10:FF:000002">
    <property type="entry name" value="Anthranilate phosphoribosyltransferase"/>
    <property type="match status" value="1"/>
</dbReference>
<dbReference type="Gene3D" id="3.40.1030.10">
    <property type="entry name" value="Nucleoside phosphorylase/phosphoribosyltransferase catalytic domain"/>
    <property type="match status" value="1"/>
</dbReference>
<dbReference type="Gene3D" id="1.20.970.10">
    <property type="entry name" value="Transferase, Pyrimidine Nucleoside Phosphorylase, Chain C"/>
    <property type="match status" value="1"/>
</dbReference>
<dbReference type="HAMAP" id="MF_00211">
    <property type="entry name" value="TrpD"/>
    <property type="match status" value="1"/>
</dbReference>
<dbReference type="InterPro" id="IPR005940">
    <property type="entry name" value="Anthranilate_Pribosyl_Tfrase"/>
</dbReference>
<dbReference type="InterPro" id="IPR000312">
    <property type="entry name" value="Glycosyl_Trfase_fam3"/>
</dbReference>
<dbReference type="InterPro" id="IPR017459">
    <property type="entry name" value="Glycosyl_Trfase_fam3_N_dom"/>
</dbReference>
<dbReference type="InterPro" id="IPR036320">
    <property type="entry name" value="Glycosyl_Trfase_fam3_N_dom_sf"/>
</dbReference>
<dbReference type="InterPro" id="IPR035902">
    <property type="entry name" value="Nuc_phospho_transferase"/>
</dbReference>
<dbReference type="NCBIfam" id="TIGR01245">
    <property type="entry name" value="trpD"/>
    <property type="match status" value="1"/>
</dbReference>
<dbReference type="PANTHER" id="PTHR43285">
    <property type="entry name" value="ANTHRANILATE PHOSPHORIBOSYLTRANSFERASE"/>
    <property type="match status" value="1"/>
</dbReference>
<dbReference type="PANTHER" id="PTHR43285:SF2">
    <property type="entry name" value="ANTHRANILATE PHOSPHORIBOSYLTRANSFERASE"/>
    <property type="match status" value="1"/>
</dbReference>
<dbReference type="Pfam" id="PF02885">
    <property type="entry name" value="Glycos_trans_3N"/>
    <property type="match status" value="1"/>
</dbReference>
<dbReference type="Pfam" id="PF00591">
    <property type="entry name" value="Glycos_transf_3"/>
    <property type="match status" value="1"/>
</dbReference>
<dbReference type="SUPFAM" id="SSF52418">
    <property type="entry name" value="Nucleoside phosphorylase/phosphoribosyltransferase catalytic domain"/>
    <property type="match status" value="1"/>
</dbReference>
<dbReference type="SUPFAM" id="SSF47648">
    <property type="entry name" value="Nucleoside phosphorylase/phosphoribosyltransferase N-terminal domain"/>
    <property type="match status" value="1"/>
</dbReference>
<feature type="chain" id="PRO_1000099834" description="Anthranilate phosphoribosyltransferase">
    <location>
        <begin position="1"/>
        <end position="351"/>
    </location>
</feature>
<feature type="binding site" evidence="1">
    <location>
        <position position="80"/>
    </location>
    <ligand>
        <name>5-phospho-alpha-D-ribose 1-diphosphate</name>
        <dbReference type="ChEBI" id="CHEBI:58017"/>
    </ligand>
</feature>
<feature type="binding site" evidence="1">
    <location>
        <position position="80"/>
    </location>
    <ligand>
        <name>anthranilate</name>
        <dbReference type="ChEBI" id="CHEBI:16567"/>
        <label>1</label>
    </ligand>
</feature>
<feature type="binding site" evidence="1">
    <location>
        <begin position="83"/>
        <end position="84"/>
    </location>
    <ligand>
        <name>5-phospho-alpha-D-ribose 1-diphosphate</name>
        <dbReference type="ChEBI" id="CHEBI:58017"/>
    </ligand>
</feature>
<feature type="binding site" evidence="1">
    <location>
        <position position="88"/>
    </location>
    <ligand>
        <name>5-phospho-alpha-D-ribose 1-diphosphate</name>
        <dbReference type="ChEBI" id="CHEBI:58017"/>
    </ligand>
</feature>
<feature type="binding site" evidence="1">
    <location>
        <begin position="90"/>
        <end position="93"/>
    </location>
    <ligand>
        <name>5-phospho-alpha-D-ribose 1-diphosphate</name>
        <dbReference type="ChEBI" id="CHEBI:58017"/>
    </ligand>
</feature>
<feature type="binding site" evidence="1">
    <location>
        <position position="92"/>
    </location>
    <ligand>
        <name>Mg(2+)</name>
        <dbReference type="ChEBI" id="CHEBI:18420"/>
        <label>1</label>
    </ligand>
</feature>
<feature type="binding site" evidence="1">
    <location>
        <begin position="108"/>
        <end position="116"/>
    </location>
    <ligand>
        <name>5-phospho-alpha-D-ribose 1-diphosphate</name>
        <dbReference type="ChEBI" id="CHEBI:58017"/>
    </ligand>
</feature>
<feature type="binding site" evidence="1">
    <location>
        <position position="111"/>
    </location>
    <ligand>
        <name>anthranilate</name>
        <dbReference type="ChEBI" id="CHEBI:16567"/>
        <label>1</label>
    </ligand>
</feature>
<feature type="binding site" evidence="1">
    <location>
        <position position="120"/>
    </location>
    <ligand>
        <name>5-phospho-alpha-D-ribose 1-diphosphate</name>
        <dbReference type="ChEBI" id="CHEBI:58017"/>
    </ligand>
</feature>
<feature type="binding site" evidence="1">
    <location>
        <position position="166"/>
    </location>
    <ligand>
        <name>anthranilate</name>
        <dbReference type="ChEBI" id="CHEBI:16567"/>
        <label>2</label>
    </ligand>
</feature>
<feature type="binding site" evidence="1">
    <location>
        <position position="229"/>
    </location>
    <ligand>
        <name>Mg(2+)</name>
        <dbReference type="ChEBI" id="CHEBI:18420"/>
        <label>2</label>
    </ligand>
</feature>
<feature type="binding site" evidence="1">
    <location>
        <position position="230"/>
    </location>
    <ligand>
        <name>Mg(2+)</name>
        <dbReference type="ChEBI" id="CHEBI:18420"/>
        <label>1</label>
    </ligand>
</feature>
<feature type="binding site" evidence="1">
    <location>
        <position position="230"/>
    </location>
    <ligand>
        <name>Mg(2+)</name>
        <dbReference type="ChEBI" id="CHEBI:18420"/>
        <label>2</label>
    </ligand>
</feature>
<protein>
    <recommendedName>
        <fullName evidence="1">Anthranilate phosphoribosyltransferase</fullName>
        <ecNumber evidence="1">2.4.2.18</ecNumber>
    </recommendedName>
</protein>
<keyword id="KW-0028">Amino-acid biosynthesis</keyword>
<keyword id="KW-0057">Aromatic amino acid biosynthesis</keyword>
<keyword id="KW-0328">Glycosyltransferase</keyword>
<keyword id="KW-0460">Magnesium</keyword>
<keyword id="KW-0479">Metal-binding</keyword>
<keyword id="KW-0808">Transferase</keyword>
<keyword id="KW-0822">Tryptophan biosynthesis</keyword>
<organism>
    <name type="scientific">Chlorobium phaeovibrioides (strain DSM 265 / 1930)</name>
    <name type="common">Prosthecochloris vibrioformis (strain DSM 265)</name>
    <dbReference type="NCBI Taxonomy" id="290318"/>
    <lineage>
        <taxon>Bacteria</taxon>
        <taxon>Pseudomonadati</taxon>
        <taxon>Chlorobiota</taxon>
        <taxon>Chlorobiia</taxon>
        <taxon>Chlorobiales</taxon>
        <taxon>Chlorobiaceae</taxon>
        <taxon>Chlorobium/Pelodictyon group</taxon>
        <taxon>Chlorobium</taxon>
    </lineage>
</organism>
<name>TRPD_CHLPM</name>
<sequence length="351" mass="37607">MAHTEILDTLQQGSKLSKPEMKRCMDAIMDGAIPDTAIATILTLLQKNGISADEIAGARESLIERATPITLDERAVDTCGTGGDSAGTFNISTAAALIANAAGVSIAKHGNRSVTSQCGSADVLEALGLPIELHPEATTALYRQTGFAFLYAPLYHPAMKKVAPVRKSLGIRTIFNILGPLLNPARVKRQLVGVFEPSLMELYAEALRQSGCSHALIVHGETESGLPLDEASVSGRTHIIELQNNVTCRHTTKPTDFHLQQWPIADLAGGTREENALLITRLLEGKATQAQREAALFAAAIACYVSGNANCIDEGICMAKEALAERRALRNLEAIIEISRDLERKYGTGKN</sequence>
<comment type="function">
    <text evidence="1">Catalyzes the transfer of the phosphoribosyl group of 5-phosphorylribose-1-pyrophosphate (PRPP) to anthranilate to yield N-(5'-phosphoribosyl)-anthranilate (PRA).</text>
</comment>
<comment type="catalytic activity">
    <reaction evidence="1">
        <text>N-(5-phospho-beta-D-ribosyl)anthranilate + diphosphate = 5-phospho-alpha-D-ribose 1-diphosphate + anthranilate</text>
        <dbReference type="Rhea" id="RHEA:11768"/>
        <dbReference type="ChEBI" id="CHEBI:16567"/>
        <dbReference type="ChEBI" id="CHEBI:18277"/>
        <dbReference type="ChEBI" id="CHEBI:33019"/>
        <dbReference type="ChEBI" id="CHEBI:58017"/>
        <dbReference type="EC" id="2.4.2.18"/>
    </reaction>
</comment>
<comment type="cofactor">
    <cofactor evidence="1">
        <name>Mg(2+)</name>
        <dbReference type="ChEBI" id="CHEBI:18420"/>
    </cofactor>
    <text evidence="1">Binds 2 magnesium ions per monomer.</text>
</comment>
<comment type="pathway">
    <text evidence="1">Amino-acid biosynthesis; L-tryptophan biosynthesis; L-tryptophan from chorismate: step 2/5.</text>
</comment>
<comment type="subunit">
    <text evidence="1">Homodimer.</text>
</comment>
<comment type="similarity">
    <text evidence="1">Belongs to the anthranilate phosphoribosyltransferase family.</text>
</comment>
<gene>
    <name evidence="1" type="primary">trpD</name>
    <name type="ordered locus">Cvib_1394</name>
</gene>
<reference key="1">
    <citation type="submission" date="2007-03" db="EMBL/GenBank/DDBJ databases">
        <title>Complete sequence of Prosthecochloris vibrioformis DSM 265.</title>
        <authorList>
            <consortium name="US DOE Joint Genome Institute"/>
            <person name="Copeland A."/>
            <person name="Lucas S."/>
            <person name="Lapidus A."/>
            <person name="Barry K."/>
            <person name="Detter J.C."/>
            <person name="Glavina del Rio T."/>
            <person name="Hammon N."/>
            <person name="Israni S."/>
            <person name="Pitluck S."/>
            <person name="Schmutz J."/>
            <person name="Larimer F."/>
            <person name="Land M."/>
            <person name="Hauser L."/>
            <person name="Mikhailova N."/>
            <person name="Li T."/>
            <person name="Overmann J."/>
            <person name="Schuster S.C."/>
            <person name="Bryant D.A."/>
            <person name="Richardson P."/>
        </authorList>
    </citation>
    <scope>NUCLEOTIDE SEQUENCE [LARGE SCALE GENOMIC DNA]</scope>
    <source>
        <strain>DSM 265 / 1930</strain>
    </source>
</reference>
<proteinExistence type="inferred from homology"/>
<accession>A4SFZ6</accession>